<proteinExistence type="inferred from homology"/>
<protein>
    <recommendedName>
        <fullName evidence="1">Ribosome-binding factor A</fullName>
    </recommendedName>
</protein>
<feature type="chain" id="PRO_1000000173" description="Ribosome-binding factor A">
    <location>
        <begin position="1"/>
        <end position="128"/>
    </location>
</feature>
<keyword id="KW-0963">Cytoplasm</keyword>
<keyword id="KW-0690">Ribosome biogenesis</keyword>
<accession>A6VCK0</accession>
<organism>
    <name type="scientific">Pseudomonas paraeruginosa (strain DSM 24068 / PA7)</name>
    <name type="common">Pseudomonas aeruginosa (strain PA7)</name>
    <dbReference type="NCBI Taxonomy" id="381754"/>
    <lineage>
        <taxon>Bacteria</taxon>
        <taxon>Pseudomonadati</taxon>
        <taxon>Pseudomonadota</taxon>
        <taxon>Gammaproteobacteria</taxon>
        <taxon>Pseudomonadales</taxon>
        <taxon>Pseudomonadaceae</taxon>
        <taxon>Pseudomonas</taxon>
        <taxon>Pseudomonas paraeruginosa</taxon>
    </lineage>
</organism>
<sequence length="128" mass="14563">MAKDYSRTQRIGDQMQRELAQLIQREIKDPRLGLVTITGVEVSRDVAHAKVFITVMGQDDAERVALNMEILNDAAGYLRMLLGKSMKLRSVPQLHFHYDESIRRGAELSALIERAVAEDRRHGDESED</sequence>
<evidence type="ECO:0000255" key="1">
    <source>
        <dbReference type="HAMAP-Rule" id="MF_00003"/>
    </source>
</evidence>
<reference key="1">
    <citation type="submission" date="2007-06" db="EMBL/GenBank/DDBJ databases">
        <authorList>
            <person name="Dodson R.J."/>
            <person name="Harkins D."/>
            <person name="Paulsen I.T."/>
        </authorList>
    </citation>
    <scope>NUCLEOTIDE SEQUENCE [LARGE SCALE GENOMIC DNA]</scope>
    <source>
        <strain>DSM 24068 / PA7</strain>
    </source>
</reference>
<gene>
    <name evidence="1" type="primary">rbfA</name>
    <name type="ordered locus">PSPA7_5461</name>
</gene>
<name>RBFA_PSEP7</name>
<comment type="function">
    <text evidence="1">One of several proteins that assist in the late maturation steps of the functional core of the 30S ribosomal subunit. Associates with free 30S ribosomal subunits (but not with 30S subunits that are part of 70S ribosomes or polysomes). Required for efficient processing of 16S rRNA. May interact with the 5'-terminal helix region of 16S rRNA.</text>
</comment>
<comment type="subunit">
    <text evidence="1">Monomer. Binds 30S ribosomal subunits, but not 50S ribosomal subunits or 70S ribosomes.</text>
</comment>
<comment type="subcellular location">
    <subcellularLocation>
        <location evidence="1">Cytoplasm</location>
    </subcellularLocation>
</comment>
<comment type="similarity">
    <text evidence="1">Belongs to the RbfA family.</text>
</comment>
<dbReference type="EMBL" id="CP000744">
    <property type="protein sequence ID" value="ABR86351.1"/>
    <property type="molecule type" value="Genomic_DNA"/>
</dbReference>
<dbReference type="RefSeq" id="WP_003148736.1">
    <property type="nucleotide sequence ID" value="NC_009656.1"/>
</dbReference>
<dbReference type="SMR" id="A6VCK0"/>
<dbReference type="GeneID" id="77223278"/>
<dbReference type="KEGG" id="pap:PSPA7_5461"/>
<dbReference type="HOGENOM" id="CLU_089475_5_0_6"/>
<dbReference type="Proteomes" id="UP000001582">
    <property type="component" value="Chromosome"/>
</dbReference>
<dbReference type="GO" id="GO:0005829">
    <property type="term" value="C:cytosol"/>
    <property type="evidence" value="ECO:0007669"/>
    <property type="project" value="TreeGrafter"/>
</dbReference>
<dbReference type="GO" id="GO:0043024">
    <property type="term" value="F:ribosomal small subunit binding"/>
    <property type="evidence" value="ECO:0007669"/>
    <property type="project" value="TreeGrafter"/>
</dbReference>
<dbReference type="GO" id="GO:0030490">
    <property type="term" value="P:maturation of SSU-rRNA"/>
    <property type="evidence" value="ECO:0007669"/>
    <property type="project" value="UniProtKB-UniRule"/>
</dbReference>
<dbReference type="Gene3D" id="3.30.300.20">
    <property type="match status" value="1"/>
</dbReference>
<dbReference type="HAMAP" id="MF_00003">
    <property type="entry name" value="RbfA"/>
    <property type="match status" value="1"/>
</dbReference>
<dbReference type="InterPro" id="IPR015946">
    <property type="entry name" value="KH_dom-like_a/b"/>
</dbReference>
<dbReference type="InterPro" id="IPR000238">
    <property type="entry name" value="RbfA"/>
</dbReference>
<dbReference type="InterPro" id="IPR023799">
    <property type="entry name" value="RbfA_dom_sf"/>
</dbReference>
<dbReference type="InterPro" id="IPR020053">
    <property type="entry name" value="Ribosome-bd_factorA_CS"/>
</dbReference>
<dbReference type="NCBIfam" id="TIGR00082">
    <property type="entry name" value="rbfA"/>
    <property type="match status" value="1"/>
</dbReference>
<dbReference type="PANTHER" id="PTHR33515">
    <property type="entry name" value="RIBOSOME-BINDING FACTOR A, CHLOROPLASTIC-RELATED"/>
    <property type="match status" value="1"/>
</dbReference>
<dbReference type="PANTHER" id="PTHR33515:SF1">
    <property type="entry name" value="RIBOSOME-BINDING FACTOR A, CHLOROPLASTIC-RELATED"/>
    <property type="match status" value="1"/>
</dbReference>
<dbReference type="Pfam" id="PF02033">
    <property type="entry name" value="RBFA"/>
    <property type="match status" value="1"/>
</dbReference>
<dbReference type="SUPFAM" id="SSF89919">
    <property type="entry name" value="Ribosome-binding factor A, RbfA"/>
    <property type="match status" value="1"/>
</dbReference>
<dbReference type="PROSITE" id="PS01319">
    <property type="entry name" value="RBFA"/>
    <property type="match status" value="1"/>
</dbReference>